<name>SYP_MOOTA</name>
<protein>
    <recommendedName>
        <fullName evidence="1">Proline--tRNA ligase</fullName>
        <ecNumber evidence="1">6.1.1.15</ecNumber>
    </recommendedName>
    <alternativeName>
        <fullName evidence="1">Prolyl-tRNA synthetase</fullName>
        <shortName evidence="1">ProRS</shortName>
    </alternativeName>
</protein>
<keyword id="KW-0030">Aminoacyl-tRNA synthetase</keyword>
<keyword id="KW-0067">ATP-binding</keyword>
<keyword id="KW-0963">Cytoplasm</keyword>
<keyword id="KW-0436">Ligase</keyword>
<keyword id="KW-0547">Nucleotide-binding</keyword>
<keyword id="KW-0648">Protein biosynthesis</keyword>
<dbReference type="EC" id="6.1.1.15" evidence="1"/>
<dbReference type="EMBL" id="CP000232">
    <property type="protein sequence ID" value="ABC19358.1"/>
    <property type="molecule type" value="Genomic_DNA"/>
</dbReference>
<dbReference type="RefSeq" id="YP_429901.1">
    <property type="nucleotide sequence ID" value="NC_007644.1"/>
</dbReference>
<dbReference type="SMR" id="Q2RJN1"/>
<dbReference type="STRING" id="264732.Moth_1044"/>
<dbReference type="EnsemblBacteria" id="ABC19358">
    <property type="protein sequence ID" value="ABC19358"/>
    <property type="gene ID" value="Moth_1044"/>
</dbReference>
<dbReference type="KEGG" id="mta:Moth_1044"/>
<dbReference type="PATRIC" id="fig|264732.11.peg.1124"/>
<dbReference type="eggNOG" id="COG0442">
    <property type="taxonomic scope" value="Bacteria"/>
</dbReference>
<dbReference type="HOGENOM" id="CLU_016739_0_0_9"/>
<dbReference type="OrthoDB" id="9809052at2"/>
<dbReference type="GO" id="GO:0005829">
    <property type="term" value="C:cytosol"/>
    <property type="evidence" value="ECO:0007669"/>
    <property type="project" value="TreeGrafter"/>
</dbReference>
<dbReference type="GO" id="GO:0002161">
    <property type="term" value="F:aminoacyl-tRNA deacylase activity"/>
    <property type="evidence" value="ECO:0007669"/>
    <property type="project" value="InterPro"/>
</dbReference>
<dbReference type="GO" id="GO:0005524">
    <property type="term" value="F:ATP binding"/>
    <property type="evidence" value="ECO:0007669"/>
    <property type="project" value="UniProtKB-UniRule"/>
</dbReference>
<dbReference type="GO" id="GO:0140096">
    <property type="term" value="F:catalytic activity, acting on a protein"/>
    <property type="evidence" value="ECO:0007669"/>
    <property type="project" value="UniProtKB-ARBA"/>
</dbReference>
<dbReference type="GO" id="GO:0004827">
    <property type="term" value="F:proline-tRNA ligase activity"/>
    <property type="evidence" value="ECO:0007669"/>
    <property type="project" value="UniProtKB-UniRule"/>
</dbReference>
<dbReference type="GO" id="GO:0016740">
    <property type="term" value="F:transferase activity"/>
    <property type="evidence" value="ECO:0007669"/>
    <property type="project" value="UniProtKB-ARBA"/>
</dbReference>
<dbReference type="GO" id="GO:0006433">
    <property type="term" value="P:prolyl-tRNA aminoacylation"/>
    <property type="evidence" value="ECO:0007669"/>
    <property type="project" value="UniProtKB-UniRule"/>
</dbReference>
<dbReference type="CDD" id="cd04334">
    <property type="entry name" value="ProRS-INS"/>
    <property type="match status" value="1"/>
</dbReference>
<dbReference type="CDD" id="cd00861">
    <property type="entry name" value="ProRS_anticodon_short"/>
    <property type="match status" value="1"/>
</dbReference>
<dbReference type="CDD" id="cd00779">
    <property type="entry name" value="ProRS_core_prok"/>
    <property type="match status" value="1"/>
</dbReference>
<dbReference type="FunFam" id="3.30.930.10:FF:000065">
    <property type="entry name" value="Proline--tRNA ligase"/>
    <property type="match status" value="1"/>
</dbReference>
<dbReference type="FunFam" id="3.30.930.10:FF:000066">
    <property type="entry name" value="Proline--tRNA ligase"/>
    <property type="match status" value="1"/>
</dbReference>
<dbReference type="Gene3D" id="3.40.50.800">
    <property type="entry name" value="Anticodon-binding domain"/>
    <property type="match status" value="1"/>
</dbReference>
<dbReference type="Gene3D" id="3.30.930.10">
    <property type="entry name" value="Bira Bifunctional Protein, Domain 2"/>
    <property type="match status" value="2"/>
</dbReference>
<dbReference type="Gene3D" id="3.90.960.10">
    <property type="entry name" value="YbaK/aminoacyl-tRNA synthetase-associated domain"/>
    <property type="match status" value="1"/>
</dbReference>
<dbReference type="HAMAP" id="MF_01569">
    <property type="entry name" value="Pro_tRNA_synth_type1"/>
    <property type="match status" value="1"/>
</dbReference>
<dbReference type="InterPro" id="IPR002314">
    <property type="entry name" value="aa-tRNA-synt_IIb"/>
</dbReference>
<dbReference type="InterPro" id="IPR006195">
    <property type="entry name" value="aa-tRNA-synth_II"/>
</dbReference>
<dbReference type="InterPro" id="IPR045864">
    <property type="entry name" value="aa-tRNA-synth_II/BPL/LPL"/>
</dbReference>
<dbReference type="InterPro" id="IPR004154">
    <property type="entry name" value="Anticodon-bd"/>
</dbReference>
<dbReference type="InterPro" id="IPR036621">
    <property type="entry name" value="Anticodon-bd_dom_sf"/>
</dbReference>
<dbReference type="InterPro" id="IPR002316">
    <property type="entry name" value="Pro-tRNA-ligase_IIa"/>
</dbReference>
<dbReference type="InterPro" id="IPR004500">
    <property type="entry name" value="Pro-tRNA-synth_IIa_bac-type"/>
</dbReference>
<dbReference type="InterPro" id="IPR023717">
    <property type="entry name" value="Pro-tRNA-Synthase_IIa_type1"/>
</dbReference>
<dbReference type="InterPro" id="IPR050062">
    <property type="entry name" value="Pro-tRNA_synthetase"/>
</dbReference>
<dbReference type="InterPro" id="IPR044140">
    <property type="entry name" value="ProRS_anticodon_short"/>
</dbReference>
<dbReference type="InterPro" id="IPR033730">
    <property type="entry name" value="ProRS_core_prok"/>
</dbReference>
<dbReference type="InterPro" id="IPR036754">
    <property type="entry name" value="YbaK/aa-tRNA-synt-asso_dom_sf"/>
</dbReference>
<dbReference type="InterPro" id="IPR007214">
    <property type="entry name" value="YbaK/aa-tRNA-synth-assoc-dom"/>
</dbReference>
<dbReference type="NCBIfam" id="NF006625">
    <property type="entry name" value="PRK09194.1"/>
    <property type="match status" value="1"/>
</dbReference>
<dbReference type="NCBIfam" id="TIGR00409">
    <property type="entry name" value="proS_fam_II"/>
    <property type="match status" value="1"/>
</dbReference>
<dbReference type="PANTHER" id="PTHR42753">
    <property type="entry name" value="MITOCHONDRIAL RIBOSOME PROTEIN L39/PROLYL-TRNA LIGASE FAMILY MEMBER"/>
    <property type="match status" value="1"/>
</dbReference>
<dbReference type="PANTHER" id="PTHR42753:SF2">
    <property type="entry name" value="PROLINE--TRNA LIGASE"/>
    <property type="match status" value="1"/>
</dbReference>
<dbReference type="Pfam" id="PF03129">
    <property type="entry name" value="HGTP_anticodon"/>
    <property type="match status" value="1"/>
</dbReference>
<dbReference type="Pfam" id="PF00587">
    <property type="entry name" value="tRNA-synt_2b"/>
    <property type="match status" value="1"/>
</dbReference>
<dbReference type="Pfam" id="PF04073">
    <property type="entry name" value="tRNA_edit"/>
    <property type="match status" value="1"/>
</dbReference>
<dbReference type="PIRSF" id="PIRSF001535">
    <property type="entry name" value="ProRS_1"/>
    <property type="match status" value="1"/>
</dbReference>
<dbReference type="PRINTS" id="PR01046">
    <property type="entry name" value="TRNASYNTHPRO"/>
</dbReference>
<dbReference type="SUPFAM" id="SSF52954">
    <property type="entry name" value="Class II aaRS ABD-related"/>
    <property type="match status" value="1"/>
</dbReference>
<dbReference type="SUPFAM" id="SSF55681">
    <property type="entry name" value="Class II aaRS and biotin synthetases"/>
    <property type="match status" value="1"/>
</dbReference>
<dbReference type="SUPFAM" id="SSF55826">
    <property type="entry name" value="YbaK/ProRS associated domain"/>
    <property type="match status" value="1"/>
</dbReference>
<dbReference type="PROSITE" id="PS50862">
    <property type="entry name" value="AA_TRNA_LIGASE_II"/>
    <property type="match status" value="1"/>
</dbReference>
<organism>
    <name type="scientific">Moorella thermoacetica (strain ATCC 39073 / JCM 9320)</name>
    <dbReference type="NCBI Taxonomy" id="264732"/>
    <lineage>
        <taxon>Bacteria</taxon>
        <taxon>Bacillati</taxon>
        <taxon>Bacillota</taxon>
        <taxon>Clostridia</taxon>
        <taxon>Moorellales</taxon>
        <taxon>Moorellaceae</taxon>
        <taxon>Moorella</taxon>
    </lineage>
</organism>
<comment type="function">
    <text evidence="1">Catalyzes the attachment of proline to tRNA(Pro) in a two-step reaction: proline is first activated by ATP to form Pro-AMP and then transferred to the acceptor end of tRNA(Pro). As ProRS can inadvertently accommodate and process non-cognate amino acids such as alanine and cysteine, to avoid such errors it has two additional distinct editing activities against alanine. One activity is designated as 'pretransfer' editing and involves the tRNA(Pro)-independent hydrolysis of activated Ala-AMP. The other activity is designated 'posttransfer' editing and involves deacylation of mischarged Ala-tRNA(Pro). The misacylated Cys-tRNA(Pro) is not edited by ProRS.</text>
</comment>
<comment type="catalytic activity">
    <reaction evidence="1">
        <text>tRNA(Pro) + L-proline + ATP = L-prolyl-tRNA(Pro) + AMP + diphosphate</text>
        <dbReference type="Rhea" id="RHEA:14305"/>
        <dbReference type="Rhea" id="RHEA-COMP:9700"/>
        <dbReference type="Rhea" id="RHEA-COMP:9702"/>
        <dbReference type="ChEBI" id="CHEBI:30616"/>
        <dbReference type="ChEBI" id="CHEBI:33019"/>
        <dbReference type="ChEBI" id="CHEBI:60039"/>
        <dbReference type="ChEBI" id="CHEBI:78442"/>
        <dbReference type="ChEBI" id="CHEBI:78532"/>
        <dbReference type="ChEBI" id="CHEBI:456215"/>
        <dbReference type="EC" id="6.1.1.15"/>
    </reaction>
</comment>
<comment type="subunit">
    <text evidence="1">Homodimer.</text>
</comment>
<comment type="subcellular location">
    <subcellularLocation>
        <location evidence="1">Cytoplasm</location>
    </subcellularLocation>
</comment>
<comment type="domain">
    <text evidence="1">Consists of three domains: the N-terminal catalytic domain, the editing domain and the C-terminal anticodon-binding domain.</text>
</comment>
<comment type="similarity">
    <text evidence="1">Belongs to the class-II aminoacyl-tRNA synthetase family. ProS type 1 subfamily.</text>
</comment>
<accession>Q2RJN1</accession>
<gene>
    <name evidence="1" type="primary">proS</name>
    <name type="ordered locus">Moth_1044</name>
</gene>
<evidence type="ECO:0000255" key="1">
    <source>
        <dbReference type="HAMAP-Rule" id="MF_01569"/>
    </source>
</evidence>
<feature type="chain" id="PRO_0000248723" description="Proline--tRNA ligase">
    <location>
        <begin position="1"/>
        <end position="573"/>
    </location>
</feature>
<proteinExistence type="inferred from homology"/>
<reference key="1">
    <citation type="journal article" date="2008" name="Environ. Microbiol.">
        <title>The complete genome sequence of Moorella thermoacetica (f. Clostridium thermoaceticum).</title>
        <authorList>
            <person name="Pierce E."/>
            <person name="Xie G."/>
            <person name="Barabote R.D."/>
            <person name="Saunders E."/>
            <person name="Han C.S."/>
            <person name="Detter J.C."/>
            <person name="Richardson P."/>
            <person name="Brettin T.S."/>
            <person name="Das A."/>
            <person name="Ljungdahl L.G."/>
            <person name="Ragsdale S.W."/>
        </authorList>
    </citation>
    <scope>NUCLEOTIDE SEQUENCE [LARGE SCALE GENOMIC DNA]</scope>
    <source>
        <strain>ATCC 39073 / JCM 9320</strain>
    </source>
</reference>
<sequence>MRASELLAPTLRETPAEAEIVSHQLLLRGGFIRKAAAGIYTYLPLGRRVLAKIEQIIREEMDRAGGQEVVLPIIQPAELWQESGRWEVYGEEMFRLQDRHRRQFCLGPTHEEIITALVRSEVTSYKQLPLLLYQIQNKYRDERRPRFGLLRGREFIMKDLYSFDLDQEGLNQSYRKMYQAYSNVFRRCGLDFRPVQADSGAIGGNYSHEFMALATAGEALLVYCRECDYAANVEIAVAKALPMIATENPAPLKEVATPGQKTVAEICTFLEVTPDRLIKTLFYEADGQLIAALVRGDRELNEVKLQNHLGCRHLLLADPERVRKATGAPVGFVGPVGLQGIPLYADLEIPYLVNGVAGANREGYHLVNVNPGRDFNPTAVVDIRQVEAGEPCPQCGAPLAQARGIEVGQVFQLGTKYSGALGANYTDARGQEHPIVMGCYGIGVSRTMAAIVEQCHDDQGIIWPLSVAPYQVVIIPASLKDDGQRQVAEGLYRELAAAGVEVVYDDRDERAGLKFVEADLIGYPLRITVGKRTITSGTVDVKWRSRKEETPLPLEGLSAQIQALLAREMEKYR</sequence>